<keyword id="KW-0030">Aminoacyl-tRNA synthetase</keyword>
<keyword id="KW-0067">ATP-binding</keyword>
<keyword id="KW-0963">Cytoplasm</keyword>
<keyword id="KW-0436">Ligase</keyword>
<keyword id="KW-0479">Metal-binding</keyword>
<keyword id="KW-0547">Nucleotide-binding</keyword>
<keyword id="KW-0648">Protein biosynthesis</keyword>
<keyword id="KW-1185">Reference proteome</keyword>
<keyword id="KW-0862">Zinc</keyword>
<accession>Q5HPZ9</accession>
<evidence type="ECO:0000250" key="1"/>
<evidence type="ECO:0000305" key="2"/>
<reference key="1">
    <citation type="journal article" date="2005" name="J. Bacteriol.">
        <title>Insights on evolution of virulence and resistance from the complete genome analysis of an early methicillin-resistant Staphylococcus aureus strain and a biofilm-producing methicillin-resistant Staphylococcus epidermidis strain.</title>
        <authorList>
            <person name="Gill S.R."/>
            <person name="Fouts D.E."/>
            <person name="Archer G.L."/>
            <person name="Mongodin E.F."/>
            <person name="DeBoy R.T."/>
            <person name="Ravel J."/>
            <person name="Paulsen I.T."/>
            <person name="Kolonay J.F."/>
            <person name="Brinkac L.M."/>
            <person name="Beanan M.J."/>
            <person name="Dodson R.J."/>
            <person name="Daugherty S.C."/>
            <person name="Madupu R."/>
            <person name="Angiuoli S.V."/>
            <person name="Durkin A.S."/>
            <person name="Haft D.H."/>
            <person name="Vamathevan J.J."/>
            <person name="Khouri H."/>
            <person name="Utterback T.R."/>
            <person name="Lee C."/>
            <person name="Dimitrov G."/>
            <person name="Jiang L."/>
            <person name="Qin H."/>
            <person name="Weidman J."/>
            <person name="Tran K."/>
            <person name="Kang K.H."/>
            <person name="Hance I.R."/>
            <person name="Nelson K.E."/>
            <person name="Fraser C.M."/>
        </authorList>
    </citation>
    <scope>NUCLEOTIDE SEQUENCE [LARGE SCALE GENOMIC DNA]</scope>
    <source>
        <strain>ATCC 35984 / DSM 28319 / BCRC 17069 / CCUG 31568 / BM 3577 / RP62A</strain>
    </source>
</reference>
<proteinExistence type="inferred from homology"/>
<name>SYI_STAEQ</name>
<protein>
    <recommendedName>
        <fullName>Isoleucine--tRNA ligase</fullName>
        <ecNumber>6.1.1.5</ecNumber>
    </recommendedName>
    <alternativeName>
        <fullName>Isoleucyl-tRNA synthetase</fullName>
        <shortName>IleRS</shortName>
    </alternativeName>
</protein>
<dbReference type="EC" id="6.1.1.5"/>
<dbReference type="EMBL" id="CP000029">
    <property type="protein sequence ID" value="AAW54153.1"/>
    <property type="molecule type" value="Genomic_DNA"/>
</dbReference>
<dbReference type="RefSeq" id="WP_002490488.1">
    <property type="nucleotide sequence ID" value="NC_002976.3"/>
</dbReference>
<dbReference type="SMR" id="Q5HPZ9"/>
<dbReference type="STRING" id="176279.SERP0758"/>
<dbReference type="KEGG" id="ser:SERP0758"/>
<dbReference type="eggNOG" id="COG0060">
    <property type="taxonomic scope" value="Bacteria"/>
</dbReference>
<dbReference type="HOGENOM" id="CLU_001493_7_1_9"/>
<dbReference type="Proteomes" id="UP000000531">
    <property type="component" value="Chromosome"/>
</dbReference>
<dbReference type="GO" id="GO:0005829">
    <property type="term" value="C:cytosol"/>
    <property type="evidence" value="ECO:0007669"/>
    <property type="project" value="TreeGrafter"/>
</dbReference>
<dbReference type="GO" id="GO:0002161">
    <property type="term" value="F:aminoacyl-tRNA deacylase activity"/>
    <property type="evidence" value="ECO:0007669"/>
    <property type="project" value="InterPro"/>
</dbReference>
<dbReference type="GO" id="GO:0005524">
    <property type="term" value="F:ATP binding"/>
    <property type="evidence" value="ECO:0007669"/>
    <property type="project" value="UniProtKB-UniRule"/>
</dbReference>
<dbReference type="GO" id="GO:0004822">
    <property type="term" value="F:isoleucine-tRNA ligase activity"/>
    <property type="evidence" value="ECO:0007669"/>
    <property type="project" value="UniProtKB-UniRule"/>
</dbReference>
<dbReference type="GO" id="GO:0000049">
    <property type="term" value="F:tRNA binding"/>
    <property type="evidence" value="ECO:0007669"/>
    <property type="project" value="InterPro"/>
</dbReference>
<dbReference type="GO" id="GO:0008270">
    <property type="term" value="F:zinc ion binding"/>
    <property type="evidence" value="ECO:0007669"/>
    <property type="project" value="UniProtKB-UniRule"/>
</dbReference>
<dbReference type="GO" id="GO:0006428">
    <property type="term" value="P:isoleucyl-tRNA aminoacylation"/>
    <property type="evidence" value="ECO:0007669"/>
    <property type="project" value="UniProtKB-UniRule"/>
</dbReference>
<dbReference type="CDD" id="cd07960">
    <property type="entry name" value="Anticodon_Ia_Ile_BEm"/>
    <property type="match status" value="1"/>
</dbReference>
<dbReference type="CDD" id="cd00818">
    <property type="entry name" value="IleRS_core"/>
    <property type="match status" value="1"/>
</dbReference>
<dbReference type="FunFam" id="1.10.10.830:FF:000001">
    <property type="entry name" value="Isoleucine--tRNA ligase"/>
    <property type="match status" value="1"/>
</dbReference>
<dbReference type="FunFam" id="1.10.730.20:FF:000001">
    <property type="entry name" value="Isoleucine--tRNA ligase"/>
    <property type="match status" value="1"/>
</dbReference>
<dbReference type="FunFam" id="3.40.50.620:FF:000152">
    <property type="entry name" value="Isoleucine--tRNA ligase"/>
    <property type="match status" value="1"/>
</dbReference>
<dbReference type="Gene3D" id="1.10.730.20">
    <property type="match status" value="1"/>
</dbReference>
<dbReference type="Gene3D" id="3.40.50.620">
    <property type="entry name" value="HUPs"/>
    <property type="match status" value="2"/>
</dbReference>
<dbReference type="Gene3D" id="1.10.10.830">
    <property type="entry name" value="Ile-tRNA synthetase CP2 domain-like"/>
    <property type="match status" value="1"/>
</dbReference>
<dbReference type="HAMAP" id="MF_02002">
    <property type="entry name" value="Ile_tRNA_synth_type1"/>
    <property type="match status" value="1"/>
</dbReference>
<dbReference type="InterPro" id="IPR001412">
    <property type="entry name" value="aa-tRNA-synth_I_CS"/>
</dbReference>
<dbReference type="InterPro" id="IPR002300">
    <property type="entry name" value="aa-tRNA-synth_Ia"/>
</dbReference>
<dbReference type="InterPro" id="IPR033708">
    <property type="entry name" value="Anticodon_Ile_BEm"/>
</dbReference>
<dbReference type="InterPro" id="IPR002301">
    <property type="entry name" value="Ile-tRNA-ligase"/>
</dbReference>
<dbReference type="InterPro" id="IPR023585">
    <property type="entry name" value="Ile-tRNA-ligase_type1"/>
</dbReference>
<dbReference type="InterPro" id="IPR050081">
    <property type="entry name" value="Ile-tRNA_ligase"/>
</dbReference>
<dbReference type="InterPro" id="IPR013155">
    <property type="entry name" value="M/V/L/I-tRNA-synth_anticd-bd"/>
</dbReference>
<dbReference type="InterPro" id="IPR014729">
    <property type="entry name" value="Rossmann-like_a/b/a_fold"/>
</dbReference>
<dbReference type="InterPro" id="IPR009080">
    <property type="entry name" value="tRNAsynth_Ia_anticodon-bd"/>
</dbReference>
<dbReference type="InterPro" id="IPR009008">
    <property type="entry name" value="Val/Leu/Ile-tRNA-synth_edit"/>
</dbReference>
<dbReference type="InterPro" id="IPR010663">
    <property type="entry name" value="Znf_FPG/IleRS"/>
</dbReference>
<dbReference type="NCBIfam" id="TIGR00392">
    <property type="entry name" value="ileS"/>
    <property type="match status" value="1"/>
</dbReference>
<dbReference type="PANTHER" id="PTHR42765:SF1">
    <property type="entry name" value="ISOLEUCINE--TRNA LIGASE, MITOCHONDRIAL"/>
    <property type="match status" value="1"/>
</dbReference>
<dbReference type="PANTHER" id="PTHR42765">
    <property type="entry name" value="SOLEUCYL-TRNA SYNTHETASE"/>
    <property type="match status" value="1"/>
</dbReference>
<dbReference type="Pfam" id="PF08264">
    <property type="entry name" value="Anticodon_1"/>
    <property type="match status" value="1"/>
</dbReference>
<dbReference type="Pfam" id="PF00133">
    <property type="entry name" value="tRNA-synt_1"/>
    <property type="match status" value="1"/>
</dbReference>
<dbReference type="Pfam" id="PF06827">
    <property type="entry name" value="zf-FPG_IleRS"/>
    <property type="match status" value="1"/>
</dbReference>
<dbReference type="PRINTS" id="PR00984">
    <property type="entry name" value="TRNASYNTHILE"/>
</dbReference>
<dbReference type="SUPFAM" id="SSF47323">
    <property type="entry name" value="Anticodon-binding domain of a subclass of class I aminoacyl-tRNA synthetases"/>
    <property type="match status" value="1"/>
</dbReference>
<dbReference type="SUPFAM" id="SSF52374">
    <property type="entry name" value="Nucleotidylyl transferase"/>
    <property type="match status" value="1"/>
</dbReference>
<dbReference type="SUPFAM" id="SSF50677">
    <property type="entry name" value="ValRS/IleRS/LeuRS editing domain"/>
    <property type="match status" value="1"/>
</dbReference>
<dbReference type="PROSITE" id="PS00178">
    <property type="entry name" value="AA_TRNA_LIGASE_I"/>
    <property type="match status" value="1"/>
</dbReference>
<gene>
    <name type="primary">ileS</name>
    <name type="ordered locus">SERP0758</name>
</gene>
<comment type="function">
    <text evidence="1">Catalyzes the attachment of isoleucine to tRNA(Ile). As IleRS can inadvertently accommodate and process structurally similar amino acids such as valine, to avoid such errors it has two additional distinct tRNA(Ile)-dependent editing activities. One activity is designated as 'pretransfer' editing and involves the hydrolysis of activated Val-AMP. The other activity is designated 'posttransfer' editing and involves deacylation of mischarged Val-tRNA(Ile) (By similarity).</text>
</comment>
<comment type="catalytic activity">
    <reaction>
        <text>tRNA(Ile) + L-isoleucine + ATP = L-isoleucyl-tRNA(Ile) + AMP + diphosphate</text>
        <dbReference type="Rhea" id="RHEA:11060"/>
        <dbReference type="Rhea" id="RHEA-COMP:9666"/>
        <dbReference type="Rhea" id="RHEA-COMP:9695"/>
        <dbReference type="ChEBI" id="CHEBI:30616"/>
        <dbReference type="ChEBI" id="CHEBI:33019"/>
        <dbReference type="ChEBI" id="CHEBI:58045"/>
        <dbReference type="ChEBI" id="CHEBI:78442"/>
        <dbReference type="ChEBI" id="CHEBI:78528"/>
        <dbReference type="ChEBI" id="CHEBI:456215"/>
        <dbReference type="EC" id="6.1.1.5"/>
    </reaction>
</comment>
<comment type="cofactor">
    <cofactor evidence="1">
        <name>Zn(2+)</name>
        <dbReference type="ChEBI" id="CHEBI:29105"/>
    </cofactor>
    <text evidence="1">Binds 1 zinc ion per subunit.</text>
</comment>
<comment type="subunit">
    <text evidence="1">Monomer.</text>
</comment>
<comment type="subcellular location">
    <subcellularLocation>
        <location evidence="1">Cytoplasm</location>
    </subcellularLocation>
</comment>
<comment type="domain">
    <text evidence="1">IleRS has two distinct active sites: one for aminoacylation and one for editing. The misactivated valine is translocated from the active site to the editing site, which sterically excludes the correctly activated isoleucine. The single editing site contains two valyl binding pockets, one specific for each substrate (Val-AMP or Val-tRNA(Ile)) (By similarity).</text>
</comment>
<comment type="similarity">
    <text evidence="2">Belongs to the class-I aminoacyl-tRNA synthetase family. IleS type 1 subfamily.</text>
</comment>
<organism>
    <name type="scientific">Staphylococcus epidermidis (strain ATCC 35984 / DSM 28319 / BCRC 17069 / CCUG 31568 / BM 3577 / RP62A)</name>
    <dbReference type="NCBI Taxonomy" id="176279"/>
    <lineage>
        <taxon>Bacteria</taxon>
        <taxon>Bacillati</taxon>
        <taxon>Bacillota</taxon>
        <taxon>Bacilli</taxon>
        <taxon>Bacillales</taxon>
        <taxon>Staphylococcaceae</taxon>
        <taxon>Staphylococcus</taxon>
    </lineage>
</organism>
<sequence>MNYKDTLLMPKTDFPMRGGLPNKEPQIQEMWDNDDQYRKALEKNKNNPSFILHDGPPYANGNLHMGHALNKIIKDFIVRYKTMQGFYAPYVPGWDTHGLPIEQALTKKGVDRKKMSVAEFREKCKEFALKQIDIQKKDFKRLGVRGDFNNPYITLTPEYEAAQIRLFGEMADKGLIYKGKKPVYWSPSSESSLAEAEIEYHDKRSASIYVAFDVKDSKGKVDSDAQFIIWTTTPWTIPSNVAITVHPELKYGQYNVDGHKYIVAQALSEEVAEALGWDKDSIQLEKEFTGKELEFVEAQHPFLDRVSLVINGEHVTTDAGTGCVHTAPGHGEDDYIVGQKYDLPVISPLNDKGVFTEEGGPFEGMFYDKANKAVTDLLKEKDALLKLDFITHSYPHDWRTKKPVIFRATPQWFASINKVRQDILDAIEDTNFKVDWGKTRIYNMIRDRGEWVISRQRVWGVPLPVFYAENGDIIMTKETVNHVADLFEKHGSNIWFEKEAKELLPEGFSHPGSPNGEFTKETDIMDVWFDSGSSHRGVLETRPELSFPADLYFEGSDQYRGWFNSSITTAVATRGQAPYKFLLSHGFVMDGEGKKMSKSLGNVIVPDQVVKQKGADIARLWVSSTDYLSDVRISDEILKQTSDVYRKIRNTLRFMLGNINDFNPETDSIAETNLLEVDRYLLNRLREFTASTINNYENFDYLNIYQEVQNFINVELSNFYLDYGKDILYIEKKDSHKRRSMQTVLYQILVDMTKLLAPILVHTAEEVWSHTPHVKEESVHLSDMPKVVDVDEELLEKWNTFMNLRDDVNRALEQARNEKVIGKSLEAKVVIGSNESFNTAEFLQQFNDLQQLFIVSQVEVKDKVNDGVSYQYGDIHIKHAEGEKCERCWNYTEELGSVGELEHLCPRCQEVVKTLV</sequence>
<feature type="chain" id="PRO_0000098472" description="Isoleucine--tRNA ligase">
    <location>
        <begin position="1"/>
        <end position="916"/>
    </location>
</feature>
<feature type="short sequence motif" description="'HIGH' region">
    <location>
        <begin position="57"/>
        <end position="67"/>
    </location>
</feature>
<feature type="short sequence motif" description="'KMSKS' region">
    <location>
        <begin position="595"/>
        <end position="599"/>
    </location>
</feature>
<feature type="binding site" evidence="1">
    <location>
        <position position="554"/>
    </location>
    <ligand>
        <name>L-isoleucyl-5'-AMP</name>
        <dbReference type="ChEBI" id="CHEBI:178002"/>
    </ligand>
</feature>
<feature type="binding site" evidence="1">
    <location>
        <position position="598"/>
    </location>
    <ligand>
        <name>ATP</name>
        <dbReference type="ChEBI" id="CHEBI:30616"/>
    </ligand>
</feature>
<feature type="binding site" evidence="1">
    <location>
        <position position="885"/>
    </location>
    <ligand>
        <name>Zn(2+)</name>
        <dbReference type="ChEBI" id="CHEBI:29105"/>
    </ligand>
</feature>
<feature type="binding site" evidence="1">
    <location>
        <position position="888"/>
    </location>
    <ligand>
        <name>Zn(2+)</name>
        <dbReference type="ChEBI" id="CHEBI:29105"/>
    </ligand>
</feature>
<feature type="binding site" evidence="1">
    <location>
        <position position="905"/>
    </location>
    <ligand>
        <name>Zn(2+)</name>
        <dbReference type="ChEBI" id="CHEBI:29105"/>
    </ligand>
</feature>
<feature type="binding site" evidence="1">
    <location>
        <position position="908"/>
    </location>
    <ligand>
        <name>Zn(2+)</name>
        <dbReference type="ChEBI" id="CHEBI:29105"/>
    </ligand>
</feature>